<comment type="function">
    <molecule>Snake venom metalloproteinase</molecule>
    <text evidence="1">Impairs hemostasis in the envenomed animal.</text>
</comment>
<comment type="function">
    <molecule>Disintegrin-like salmosin-5</molecule>
    <text evidence="1">Inhibits platelet aggregation induced by ADP, thrombin, platelet-activating factor and collagen. Acts by inhibiting fibrinogen interaction with platelet receptors GPIIb/GPIIIa (ITGA2B/ITGB3) (By similarity).</text>
</comment>
<comment type="cofactor">
    <cofactor evidence="1">
        <name>Zn(2+)</name>
        <dbReference type="ChEBI" id="CHEBI:29105"/>
    </cofactor>
    <text evidence="1">Binds 1 zinc ion per subunit.</text>
</comment>
<comment type="subunit">
    <text evidence="1">Monomer.</text>
</comment>
<comment type="subcellular location">
    <subcellularLocation>
        <location evidence="1">Secreted</location>
    </subcellularLocation>
</comment>
<comment type="tissue specificity">
    <text>Expressed by the venom gland.</text>
</comment>
<comment type="similarity">
    <text evidence="4">Belongs to the venom metalloproteinase (M12B) family. P-III subfamily.</text>
</comment>
<proteinExistence type="evidence at transcript level"/>
<name>VM3S5_GLOBR</name>
<protein>
    <recommendedName>
        <fullName>Zinc metalloproteinase/disintegrin</fullName>
    </recommendedName>
    <component>
        <recommendedName>
            <fullName>Snake venom metalloproteinase</fullName>
            <shortName>SVMP</shortName>
            <ecNumber>3.4.24.-</ecNumber>
        </recommendedName>
    </component>
    <component>
        <recommendedName>
            <fullName>Disintegrin-like salmosin-5</fullName>
        </recommendedName>
    </component>
</protein>
<feature type="chain" id="PRO_0000319481" description="Snake venom metalloproteinase">
    <location>
        <begin position="1" status="less than"/>
        <end position="11"/>
    </location>
</feature>
<feature type="chain" id="PRO_0000319482" description="Disintegrin-like salmosin-5">
    <location>
        <begin position="12"/>
        <end position="103"/>
    </location>
</feature>
<feature type="propeptide" id="PRO_0000319483" evidence="1">
    <location>
        <begin position="104"/>
        <end position="190" status="greater than"/>
    </location>
</feature>
<feature type="domain" description="Peptidase M12B" evidence="3">
    <location>
        <begin position="1" status="less than"/>
        <end position="11"/>
    </location>
</feature>
<feature type="domain" description="Disintegrin" evidence="2">
    <location>
        <begin position="19"/>
        <end position="105"/>
    </location>
</feature>
<feature type="short sequence motif" description="D/ECD-tripeptide">
    <location>
        <begin position="83"/>
        <end position="85"/>
    </location>
</feature>
<feature type="binding site" evidence="1">
    <location>
        <position position="21"/>
    </location>
    <ligand>
        <name>Ca(2+)</name>
        <dbReference type="ChEBI" id="CHEBI:29108"/>
        <label>1</label>
    </ligand>
</feature>
<feature type="binding site" evidence="1">
    <location>
        <position position="24"/>
    </location>
    <ligand>
        <name>Ca(2+)</name>
        <dbReference type="ChEBI" id="CHEBI:29108"/>
        <label>1</label>
    </ligand>
</feature>
<feature type="binding site" evidence="1">
    <location>
        <position position="26"/>
    </location>
    <ligand>
        <name>Ca(2+)</name>
        <dbReference type="ChEBI" id="CHEBI:29108"/>
        <label>1</label>
    </ligand>
</feature>
<feature type="binding site" evidence="1">
    <location>
        <position position="28"/>
    </location>
    <ligand>
        <name>Ca(2+)</name>
        <dbReference type="ChEBI" id="CHEBI:29108"/>
        <label>1</label>
    </ligand>
</feature>
<feature type="binding site" evidence="1">
    <location>
        <position position="31"/>
    </location>
    <ligand>
        <name>Ca(2+)</name>
        <dbReference type="ChEBI" id="CHEBI:29108"/>
        <label>1</label>
    </ligand>
</feature>
<feature type="binding site" evidence="1">
    <location>
        <position position="34"/>
    </location>
    <ligand>
        <name>Ca(2+)</name>
        <dbReference type="ChEBI" id="CHEBI:29108"/>
        <label>1</label>
    </ligand>
</feature>
<feature type="binding site" evidence="1">
    <location>
        <position position="85"/>
    </location>
    <ligand>
        <name>Ca(2+)</name>
        <dbReference type="ChEBI" id="CHEBI:29108"/>
        <label>2</label>
    </ligand>
</feature>
<feature type="binding site" evidence="1">
    <location>
        <position position="86"/>
    </location>
    <ligand>
        <name>Ca(2+)</name>
        <dbReference type="ChEBI" id="CHEBI:29108"/>
        <label>2</label>
    </ligand>
</feature>
<feature type="binding site" evidence="1">
    <location>
        <position position="88"/>
    </location>
    <ligand>
        <name>Ca(2+)</name>
        <dbReference type="ChEBI" id="CHEBI:29108"/>
        <label>2</label>
    </ligand>
</feature>
<feature type="binding site" evidence="1">
    <location>
        <position position="100"/>
    </location>
    <ligand>
        <name>Ca(2+)</name>
        <dbReference type="ChEBI" id="CHEBI:29108"/>
        <label>2</label>
    </ligand>
</feature>
<feature type="binding site" evidence="1">
    <location>
        <position position="101"/>
    </location>
    <ligand>
        <name>Ca(2+)</name>
        <dbReference type="ChEBI" id="CHEBI:29108"/>
        <label>2</label>
    </ligand>
</feature>
<feature type="disulfide bond" evidence="1">
    <location>
        <begin position="33"/>
        <end position="51"/>
    </location>
</feature>
<feature type="disulfide bond" evidence="1">
    <location>
        <begin position="35"/>
        <end position="46"/>
    </location>
</feature>
<feature type="disulfide bond" evidence="1">
    <location>
        <begin position="45"/>
        <end position="68"/>
    </location>
</feature>
<feature type="disulfide bond" evidence="1">
    <location>
        <begin position="59"/>
        <end position="65"/>
    </location>
</feature>
<feature type="disulfide bond" evidence="1">
    <location>
        <begin position="64"/>
        <end position="90"/>
    </location>
</feature>
<feature type="disulfide bond" evidence="1">
    <location>
        <begin position="77"/>
        <end position="97"/>
    </location>
</feature>
<feature type="non-terminal residue">
    <location>
        <position position="1"/>
    </location>
</feature>
<feature type="non-terminal residue">
    <location>
        <position position="190"/>
    </location>
</feature>
<organism>
    <name type="scientific">Gloydius brevicauda</name>
    <name type="common">Korean slamosa snake</name>
    <name type="synonym">Agkistrodon halys brevicaudus</name>
    <dbReference type="NCBI Taxonomy" id="3148161"/>
    <lineage>
        <taxon>Eukaryota</taxon>
        <taxon>Metazoa</taxon>
        <taxon>Chordata</taxon>
        <taxon>Craniata</taxon>
        <taxon>Vertebrata</taxon>
        <taxon>Euteleostomi</taxon>
        <taxon>Lepidosauria</taxon>
        <taxon>Squamata</taxon>
        <taxon>Bifurcata</taxon>
        <taxon>Unidentata</taxon>
        <taxon>Episquamata</taxon>
        <taxon>Toxicofera</taxon>
        <taxon>Serpentes</taxon>
        <taxon>Colubroidea</taxon>
        <taxon>Viperidae</taxon>
        <taxon>Crotalinae</taxon>
        <taxon>Gloydius</taxon>
    </lineage>
</organism>
<accession>O93518</accession>
<keyword id="KW-0106">Calcium</keyword>
<keyword id="KW-1217">Cell adhesion impairing toxin</keyword>
<keyword id="KW-1015">Disulfide bond</keyword>
<keyword id="KW-1199">Hemostasis impairing toxin</keyword>
<keyword id="KW-0378">Hydrolase</keyword>
<keyword id="KW-0479">Metal-binding</keyword>
<keyword id="KW-0482">Metalloprotease</keyword>
<keyword id="KW-1201">Platelet aggregation inhibiting toxin</keyword>
<keyword id="KW-0645">Protease</keyword>
<keyword id="KW-0964">Secreted</keyword>
<keyword id="KW-0800">Toxin</keyword>
<keyword id="KW-0862">Zinc</keyword>
<keyword id="KW-0865">Zymogen</keyword>
<dbReference type="EC" id="3.4.24.-"/>
<dbReference type="EMBL" id="AF055339">
    <property type="protein sequence ID" value="AAC42599.1"/>
    <property type="molecule type" value="mRNA"/>
</dbReference>
<dbReference type="SMR" id="O93518"/>
<dbReference type="GO" id="GO:0005576">
    <property type="term" value="C:extracellular region"/>
    <property type="evidence" value="ECO:0007669"/>
    <property type="project" value="UniProtKB-SubCell"/>
</dbReference>
<dbReference type="GO" id="GO:0005886">
    <property type="term" value="C:plasma membrane"/>
    <property type="evidence" value="ECO:0007669"/>
    <property type="project" value="TreeGrafter"/>
</dbReference>
<dbReference type="GO" id="GO:0046872">
    <property type="term" value="F:metal ion binding"/>
    <property type="evidence" value="ECO:0007669"/>
    <property type="project" value="UniProtKB-KW"/>
</dbReference>
<dbReference type="GO" id="GO:0008237">
    <property type="term" value="F:metallopeptidase activity"/>
    <property type="evidence" value="ECO:0007669"/>
    <property type="project" value="UniProtKB-KW"/>
</dbReference>
<dbReference type="GO" id="GO:0090729">
    <property type="term" value="F:toxin activity"/>
    <property type="evidence" value="ECO:0007669"/>
    <property type="project" value="UniProtKB-KW"/>
</dbReference>
<dbReference type="GO" id="GO:0006508">
    <property type="term" value="P:proteolysis"/>
    <property type="evidence" value="ECO:0007669"/>
    <property type="project" value="UniProtKB-KW"/>
</dbReference>
<dbReference type="FunFam" id="4.10.70.10:FF:000001">
    <property type="entry name" value="Disintegrin and metalloproteinase domain-containing protein 22"/>
    <property type="match status" value="1"/>
</dbReference>
<dbReference type="Gene3D" id="4.10.70.10">
    <property type="entry name" value="Disintegrin domain"/>
    <property type="match status" value="1"/>
</dbReference>
<dbReference type="InterPro" id="IPR006586">
    <property type="entry name" value="ADAM_Cys-rich"/>
</dbReference>
<dbReference type="InterPro" id="IPR018358">
    <property type="entry name" value="Disintegrin_CS"/>
</dbReference>
<dbReference type="InterPro" id="IPR001762">
    <property type="entry name" value="Disintegrin_dom"/>
</dbReference>
<dbReference type="InterPro" id="IPR036436">
    <property type="entry name" value="Disintegrin_dom_sf"/>
</dbReference>
<dbReference type="PANTHER" id="PTHR11905">
    <property type="entry name" value="ADAM A DISINTEGRIN AND METALLOPROTEASE DOMAIN"/>
    <property type="match status" value="1"/>
</dbReference>
<dbReference type="PANTHER" id="PTHR11905:SF32">
    <property type="entry name" value="DISINTEGRIN AND METALLOPROTEINASE DOMAIN-CONTAINING PROTEIN 28"/>
    <property type="match status" value="1"/>
</dbReference>
<dbReference type="Pfam" id="PF08516">
    <property type="entry name" value="ADAM_CR"/>
    <property type="match status" value="1"/>
</dbReference>
<dbReference type="Pfam" id="PF00200">
    <property type="entry name" value="Disintegrin"/>
    <property type="match status" value="1"/>
</dbReference>
<dbReference type="PRINTS" id="PR00289">
    <property type="entry name" value="DISINTEGRIN"/>
</dbReference>
<dbReference type="SMART" id="SM00608">
    <property type="entry name" value="ACR"/>
    <property type="match status" value="1"/>
</dbReference>
<dbReference type="SMART" id="SM00050">
    <property type="entry name" value="DISIN"/>
    <property type="match status" value="1"/>
</dbReference>
<dbReference type="SUPFAM" id="SSF57552">
    <property type="entry name" value="Blood coagulation inhibitor (disintegrin)"/>
    <property type="match status" value="1"/>
</dbReference>
<dbReference type="PROSITE" id="PS00427">
    <property type="entry name" value="DISINTEGRIN_1"/>
    <property type="match status" value="1"/>
</dbReference>
<dbReference type="PROSITE" id="PS50214">
    <property type="entry name" value="DISINTEGRIN_2"/>
    <property type="match status" value="1"/>
</dbReference>
<sequence>NHNPECIVNEPLGTDIVSPPVCGNELLEVGEECDCGTPENCQNECCDAATCKLKSGSQCGHGDCCEQCKFSKSGTECRESMSECDPAEHCSGQCSECPADVFHKNGQPCLDNYGYCYNGNCPIMYHQCYALWGADVYEAEDSCFESNKKGNYYYGYCRKENGKKIPCAPEDVKCGRLYCKDNSPGQNGPC</sequence>
<reference key="1">
    <citation type="journal article" date="1998" name="Mol. Cells">
        <title>Cloning and characterization of novel disintegrins from Agkistrodon halys venom.</title>
        <authorList>
            <person name="Park D.-S."/>
            <person name="Kang I.-C."/>
            <person name="Kim H.-D."/>
            <person name="Chung K.-H."/>
            <person name="Kim D.-S."/>
            <person name="Yun Y.-D."/>
        </authorList>
    </citation>
    <scope>NUCLEOTIDE SEQUENCE [MRNA]</scope>
    <source>
        <tissue>Venom gland</tissue>
    </source>
</reference>
<evidence type="ECO:0000250" key="1"/>
<evidence type="ECO:0000255" key="2">
    <source>
        <dbReference type="PROSITE-ProRule" id="PRU00068"/>
    </source>
</evidence>
<evidence type="ECO:0000255" key="3">
    <source>
        <dbReference type="PROSITE-ProRule" id="PRU00276"/>
    </source>
</evidence>
<evidence type="ECO:0000305" key="4"/>